<proteinExistence type="evidence at protein level"/>
<organism>
    <name type="scientific">Bacillus subtilis (strain 168)</name>
    <dbReference type="NCBI Taxonomy" id="224308"/>
    <lineage>
        <taxon>Bacteria</taxon>
        <taxon>Bacillati</taxon>
        <taxon>Bacillota</taxon>
        <taxon>Bacilli</taxon>
        <taxon>Bacillales</taxon>
        <taxon>Bacillaceae</taxon>
        <taxon>Bacillus</taxon>
    </lineage>
</organism>
<reference key="1">
    <citation type="journal article" date="1996" name="Microbiology">
        <title>The 25 degrees-36 degrees region of the Bacillus subtilis chromosome: determination of the sequence of a 146 kb segment and identification of 113 genes.</title>
        <authorList>
            <person name="Yamane K."/>
            <person name="Kumano M."/>
            <person name="Kurita K."/>
        </authorList>
    </citation>
    <scope>NUCLEOTIDE SEQUENCE [GENOMIC DNA]</scope>
    <source>
        <strain>168</strain>
    </source>
</reference>
<reference key="2">
    <citation type="journal article" date="1997" name="Nature">
        <title>The complete genome sequence of the Gram-positive bacterium Bacillus subtilis.</title>
        <authorList>
            <person name="Kunst F."/>
            <person name="Ogasawara N."/>
            <person name="Moszer I."/>
            <person name="Albertini A.M."/>
            <person name="Alloni G."/>
            <person name="Azevedo V."/>
            <person name="Bertero M.G."/>
            <person name="Bessieres P."/>
            <person name="Bolotin A."/>
            <person name="Borchert S."/>
            <person name="Borriss R."/>
            <person name="Boursier L."/>
            <person name="Brans A."/>
            <person name="Braun M."/>
            <person name="Brignell S.C."/>
            <person name="Bron S."/>
            <person name="Brouillet S."/>
            <person name="Bruschi C.V."/>
            <person name="Caldwell B."/>
            <person name="Capuano V."/>
            <person name="Carter N.M."/>
            <person name="Choi S.-K."/>
            <person name="Codani J.-J."/>
            <person name="Connerton I.F."/>
            <person name="Cummings N.J."/>
            <person name="Daniel R.A."/>
            <person name="Denizot F."/>
            <person name="Devine K.M."/>
            <person name="Duesterhoeft A."/>
            <person name="Ehrlich S.D."/>
            <person name="Emmerson P.T."/>
            <person name="Entian K.-D."/>
            <person name="Errington J."/>
            <person name="Fabret C."/>
            <person name="Ferrari E."/>
            <person name="Foulger D."/>
            <person name="Fritz C."/>
            <person name="Fujita M."/>
            <person name="Fujita Y."/>
            <person name="Fuma S."/>
            <person name="Galizzi A."/>
            <person name="Galleron N."/>
            <person name="Ghim S.-Y."/>
            <person name="Glaser P."/>
            <person name="Goffeau A."/>
            <person name="Golightly E.J."/>
            <person name="Grandi G."/>
            <person name="Guiseppi G."/>
            <person name="Guy B.J."/>
            <person name="Haga K."/>
            <person name="Haiech J."/>
            <person name="Harwood C.R."/>
            <person name="Henaut A."/>
            <person name="Hilbert H."/>
            <person name="Holsappel S."/>
            <person name="Hosono S."/>
            <person name="Hullo M.-F."/>
            <person name="Itaya M."/>
            <person name="Jones L.-M."/>
            <person name="Joris B."/>
            <person name="Karamata D."/>
            <person name="Kasahara Y."/>
            <person name="Klaerr-Blanchard M."/>
            <person name="Klein C."/>
            <person name="Kobayashi Y."/>
            <person name="Koetter P."/>
            <person name="Koningstein G."/>
            <person name="Krogh S."/>
            <person name="Kumano M."/>
            <person name="Kurita K."/>
            <person name="Lapidus A."/>
            <person name="Lardinois S."/>
            <person name="Lauber J."/>
            <person name="Lazarevic V."/>
            <person name="Lee S.-M."/>
            <person name="Levine A."/>
            <person name="Liu H."/>
            <person name="Masuda S."/>
            <person name="Mauel C."/>
            <person name="Medigue C."/>
            <person name="Medina N."/>
            <person name="Mellado R.P."/>
            <person name="Mizuno M."/>
            <person name="Moestl D."/>
            <person name="Nakai S."/>
            <person name="Noback M."/>
            <person name="Noone D."/>
            <person name="O'Reilly M."/>
            <person name="Ogawa K."/>
            <person name="Ogiwara A."/>
            <person name="Oudega B."/>
            <person name="Park S.-H."/>
            <person name="Parro V."/>
            <person name="Pohl T.M."/>
            <person name="Portetelle D."/>
            <person name="Porwollik S."/>
            <person name="Prescott A.M."/>
            <person name="Presecan E."/>
            <person name="Pujic P."/>
            <person name="Purnelle B."/>
            <person name="Rapoport G."/>
            <person name="Rey M."/>
            <person name="Reynolds S."/>
            <person name="Rieger M."/>
            <person name="Rivolta C."/>
            <person name="Rocha E."/>
            <person name="Roche B."/>
            <person name="Rose M."/>
            <person name="Sadaie Y."/>
            <person name="Sato T."/>
            <person name="Scanlan E."/>
            <person name="Schleich S."/>
            <person name="Schroeter R."/>
            <person name="Scoffone F."/>
            <person name="Sekiguchi J."/>
            <person name="Sekowska A."/>
            <person name="Seror S.J."/>
            <person name="Serror P."/>
            <person name="Shin B.-S."/>
            <person name="Soldo B."/>
            <person name="Sorokin A."/>
            <person name="Tacconi E."/>
            <person name="Takagi T."/>
            <person name="Takahashi H."/>
            <person name="Takemaru K."/>
            <person name="Takeuchi M."/>
            <person name="Tamakoshi A."/>
            <person name="Tanaka T."/>
            <person name="Terpstra P."/>
            <person name="Tognoni A."/>
            <person name="Tosato V."/>
            <person name="Uchiyama S."/>
            <person name="Vandenbol M."/>
            <person name="Vannier F."/>
            <person name="Vassarotti A."/>
            <person name="Viari A."/>
            <person name="Wambutt R."/>
            <person name="Wedler E."/>
            <person name="Wedler H."/>
            <person name="Weitzenegger T."/>
            <person name="Winters P."/>
            <person name="Wipat A."/>
            <person name="Yamamoto H."/>
            <person name="Yamane K."/>
            <person name="Yasumoto K."/>
            <person name="Yata K."/>
            <person name="Yoshida K."/>
            <person name="Yoshikawa H.-F."/>
            <person name="Zumstein E."/>
            <person name="Yoshikawa H."/>
            <person name="Danchin A."/>
        </authorList>
    </citation>
    <scope>NUCLEOTIDE SEQUENCE [LARGE SCALE GENOMIC DNA]</scope>
    <source>
        <strain>168</strain>
    </source>
</reference>
<reference key="3">
    <citation type="journal article" date="2009" name="Proc. Natl. Acad. Sci. U.S.A.">
        <title>Characterization of a Bacillus subtilis transporter for petrobactin, an anthrax stealth siderophore.</title>
        <authorList>
            <person name="Zawadzka A.M."/>
            <person name="Kim Y."/>
            <person name="Maltseva N."/>
            <person name="Nichiporuk R."/>
            <person name="Fan Y."/>
            <person name="Joachimiak A."/>
            <person name="Raymond K.N."/>
        </authorList>
    </citation>
    <scope>FUNCTION</scope>
    <scope>SUBUNIT</scope>
    <source>
        <strain>168</strain>
    </source>
</reference>
<protein>
    <recommendedName>
        <fullName evidence="3">Petrobactin import system permease protein YclO</fullName>
    </recommendedName>
</protein>
<feature type="chain" id="PRO_0000359515" description="Petrobactin import system permease protein YclO">
    <location>
        <begin position="1"/>
        <end position="315"/>
    </location>
</feature>
<feature type="transmembrane region" description="Helical" evidence="1">
    <location>
        <begin position="7"/>
        <end position="27"/>
    </location>
</feature>
<feature type="transmembrane region" description="Helical" evidence="1">
    <location>
        <begin position="40"/>
        <end position="60"/>
    </location>
</feature>
<feature type="transmembrane region" description="Helical" evidence="1">
    <location>
        <begin position="76"/>
        <end position="96"/>
    </location>
</feature>
<feature type="transmembrane region" description="Helical" evidence="1">
    <location>
        <begin position="100"/>
        <end position="120"/>
    </location>
</feature>
<feature type="transmembrane region" description="Helical" evidence="1">
    <location>
        <begin position="128"/>
        <end position="148"/>
    </location>
</feature>
<feature type="transmembrane region" description="Helical" evidence="1">
    <location>
        <begin position="172"/>
        <end position="192"/>
    </location>
</feature>
<feature type="transmembrane region" description="Helical" evidence="1">
    <location>
        <begin position="223"/>
        <end position="243"/>
    </location>
</feature>
<feature type="transmembrane region" description="Helical" evidence="1">
    <location>
        <begin position="262"/>
        <end position="282"/>
    </location>
</feature>
<feature type="transmembrane region" description="Helical" evidence="1">
    <location>
        <begin position="288"/>
        <end position="308"/>
    </location>
</feature>
<evidence type="ECO:0000255" key="1"/>
<evidence type="ECO:0000269" key="2">
    <source>
    </source>
</evidence>
<evidence type="ECO:0000305" key="3"/>
<evidence type="ECO:0000305" key="4">
    <source>
    </source>
</evidence>
<comment type="function">
    <text evidence="2">Part of the ABC transporter complex YclNOPQ involved in uptake of ferric-petrobactin. Petrobactin is a photoreactive 3,4-catecholate siderophore produced by many members of the B.cereus group, including B.anthracis. Probably responsible for the translocation of the substrate across the membrane.</text>
</comment>
<comment type="subunit">
    <text evidence="4">The complex is composed of two ATP-binding proteins (YclP), two transmembrane proteins (YclN and YclO) and a solute-binding protein (YclQ).</text>
</comment>
<comment type="subcellular location">
    <subcellularLocation>
        <location evidence="3">Cell membrane</location>
        <topology evidence="1">Multi-pass membrane protein</topology>
    </subcellularLocation>
</comment>
<comment type="similarity">
    <text evidence="3">Belongs to the binding-protein-dependent transport system permease family. FecCD subfamily.</text>
</comment>
<accession>P94419</accession>
<accession>Q797P1</accession>
<dbReference type="EMBL" id="D50453">
    <property type="protein sequence ID" value="BAA09013.1"/>
    <property type="molecule type" value="Genomic_DNA"/>
</dbReference>
<dbReference type="EMBL" id="AL009126">
    <property type="protein sequence ID" value="CAB12189.1"/>
    <property type="molecule type" value="Genomic_DNA"/>
</dbReference>
<dbReference type="PIR" id="C69763">
    <property type="entry name" value="C69763"/>
</dbReference>
<dbReference type="RefSeq" id="WP_003246705.1">
    <property type="nucleotide sequence ID" value="NZ_OZ025638.1"/>
</dbReference>
<dbReference type="SMR" id="P94419"/>
<dbReference type="FunCoup" id="P94419">
    <property type="interactions" value="24"/>
</dbReference>
<dbReference type="STRING" id="224308.BSU03810"/>
<dbReference type="PaxDb" id="224308-BSU03810"/>
<dbReference type="EnsemblBacteria" id="CAB12189">
    <property type="protein sequence ID" value="CAB12189"/>
    <property type="gene ID" value="BSU_03810"/>
</dbReference>
<dbReference type="GeneID" id="938280"/>
<dbReference type="KEGG" id="bsu:BSU03810"/>
<dbReference type="PATRIC" id="fig|224308.179.peg.404"/>
<dbReference type="eggNOG" id="COG4605">
    <property type="taxonomic scope" value="Bacteria"/>
</dbReference>
<dbReference type="InParanoid" id="P94419"/>
<dbReference type="OrthoDB" id="9796260at2"/>
<dbReference type="PhylomeDB" id="P94419"/>
<dbReference type="BioCyc" id="BSUB:BSU03810-MONOMER"/>
<dbReference type="Proteomes" id="UP000001570">
    <property type="component" value="Chromosome"/>
</dbReference>
<dbReference type="GO" id="GO:0005886">
    <property type="term" value="C:plasma membrane"/>
    <property type="evidence" value="ECO:0000318"/>
    <property type="project" value="GO_Central"/>
</dbReference>
<dbReference type="GO" id="GO:0022857">
    <property type="term" value="F:transmembrane transporter activity"/>
    <property type="evidence" value="ECO:0000318"/>
    <property type="project" value="GO_Central"/>
</dbReference>
<dbReference type="GO" id="GO:0033214">
    <property type="term" value="P:siderophore-dependent iron import into cell"/>
    <property type="evidence" value="ECO:0000318"/>
    <property type="project" value="GO_Central"/>
</dbReference>
<dbReference type="CDD" id="cd06550">
    <property type="entry name" value="TM_ABC_iron-siderophores_like"/>
    <property type="match status" value="1"/>
</dbReference>
<dbReference type="FunFam" id="1.10.3470.10:FF:000004">
    <property type="entry name" value="Iron compound ABC transporter, permease"/>
    <property type="match status" value="1"/>
</dbReference>
<dbReference type="Gene3D" id="1.10.3470.10">
    <property type="entry name" value="ABC transporter involved in vitamin B12 uptake, BtuC"/>
    <property type="match status" value="1"/>
</dbReference>
<dbReference type="InterPro" id="IPR037294">
    <property type="entry name" value="ABC_BtuC-like"/>
</dbReference>
<dbReference type="InterPro" id="IPR000522">
    <property type="entry name" value="ABC_transptr_permease_BtuC"/>
</dbReference>
<dbReference type="PANTHER" id="PTHR30472">
    <property type="entry name" value="FERRIC ENTEROBACTIN TRANSPORT SYSTEM PERMEASE PROTEIN"/>
    <property type="match status" value="1"/>
</dbReference>
<dbReference type="PANTHER" id="PTHR30472:SF19">
    <property type="entry name" value="PETROBACTIN IMPORT SYSTEM PERMEASE PROTEIN YCLO"/>
    <property type="match status" value="1"/>
</dbReference>
<dbReference type="Pfam" id="PF01032">
    <property type="entry name" value="FecCD"/>
    <property type="match status" value="1"/>
</dbReference>
<dbReference type="SUPFAM" id="SSF81345">
    <property type="entry name" value="ABC transporter involved in vitamin B12 uptake, BtuC"/>
    <property type="match status" value="1"/>
</dbReference>
<keyword id="KW-1003">Cell membrane</keyword>
<keyword id="KW-0406">Ion transport</keyword>
<keyword id="KW-0408">Iron</keyword>
<keyword id="KW-0410">Iron transport</keyword>
<keyword id="KW-0472">Membrane</keyword>
<keyword id="KW-1185">Reference proteome</keyword>
<keyword id="KW-0812">Transmembrane</keyword>
<keyword id="KW-1133">Transmembrane helix</keyword>
<keyword id="KW-0813">Transport</keyword>
<name>YCLO_BACSU</name>
<sequence>MRNQMKIALLVGLAIVCIGLFLFYDLGNWDYTLPRRIKKVAAIVLTGGAIAFSTMIFQTITNNRILTPSILGLDSLYMLIQTGIIFLFGSANMVIMNKNINFIISVLLMILFSLVLYQIMFKGEGRNIFFLLLIGIVFGTLFSSLSSFMQMLIDPNEFQVVQDKMFASFNNINTDLLWLAFIIFLLTGVYVWRFTKFFDVLSLGREHAVNLGIDYDKVVKQMLIVVAILVSVSTALVGPIMFLGLLVVNLAREFLKTYKHSYLIAGSVFISIIALVGGQFVVEKVFTFSTTLSVIINFAGGIYFIYLLLKENKSW</sequence>
<gene>
    <name type="primary">yclO</name>
    <name type="ordered locus">BSU03810</name>
</gene>